<keyword id="KW-0025">Alternative splicing</keyword>
<keyword id="KW-0251">Elongation factor</keyword>
<keyword id="KW-0648">Protein biosynthesis</keyword>
<keyword id="KW-1185">Reference proteome</keyword>
<proteinExistence type="evidence at protein level"/>
<accession>O04487</accession>
<accession>Q8RXL5</accession>
<sequence length="414" mass="46661">MALVLHTYKGNKSAEKALIAAEYVGVQIDVPSDFQMGVTNKTPAFLKMNPIGKVPVLETPEGSVFESNAIARYVSRLNGDNSLNGSSLIEYAQIEQWIDFSSLEIYASILRWFGPRMGFMPYSAPAEEGAISTLKRALDALNTHLTSNTYLVGHSITLADIITVCNLNLGFATVMTKKFTSEFPHVERYFWTVVNQPNFTKVLGDVKQTEAVPPIASKKAAQPAKPKEEPKKKEAPVAEAPKLAEEEEAPKPKAKNPLDLLPPSPMVLDDWKRLYSNTKSNFREVAIKGFWDMYDPEGYSLWFCDYKYNDENMVSFVTLNKVGGFLQRMDLARKYSFGKMLICGSEGPFKVKGLWLFRGPEIPKFIMDEVYDMELYEWTKVDISDEAQKERVSQMIEDAEPFEGEALLDAKCFK</sequence>
<gene>
    <name type="ordered locus">At1g09640</name>
    <name type="ORF">F21M12.3</name>
</gene>
<evidence type="ECO:0000250" key="1"/>
<evidence type="ECO:0000255" key="2">
    <source>
        <dbReference type="PROSITE-ProRule" id="PRU00519"/>
    </source>
</evidence>
<evidence type="ECO:0000256" key="3">
    <source>
        <dbReference type="SAM" id="MobiDB-lite"/>
    </source>
</evidence>
<evidence type="ECO:0000305" key="4"/>
<protein>
    <recommendedName>
        <fullName>Probable elongation factor 1-gamma 1</fullName>
        <shortName>EF-1-gamma 1</shortName>
    </recommendedName>
    <alternativeName>
        <fullName>eEF-1B gamma 1</fullName>
    </alternativeName>
</protein>
<organism>
    <name type="scientific">Arabidopsis thaliana</name>
    <name type="common">Mouse-ear cress</name>
    <dbReference type="NCBI Taxonomy" id="3702"/>
    <lineage>
        <taxon>Eukaryota</taxon>
        <taxon>Viridiplantae</taxon>
        <taxon>Streptophyta</taxon>
        <taxon>Embryophyta</taxon>
        <taxon>Tracheophyta</taxon>
        <taxon>Spermatophyta</taxon>
        <taxon>Magnoliopsida</taxon>
        <taxon>eudicotyledons</taxon>
        <taxon>Gunneridae</taxon>
        <taxon>Pentapetalae</taxon>
        <taxon>rosids</taxon>
        <taxon>malvids</taxon>
        <taxon>Brassicales</taxon>
        <taxon>Brassicaceae</taxon>
        <taxon>Camelineae</taxon>
        <taxon>Arabidopsis</taxon>
    </lineage>
</organism>
<reference key="1">
    <citation type="journal article" date="2000" name="Nature">
        <title>Sequence and analysis of chromosome 1 of the plant Arabidopsis thaliana.</title>
        <authorList>
            <person name="Theologis A."/>
            <person name="Ecker J.R."/>
            <person name="Palm C.J."/>
            <person name="Federspiel N.A."/>
            <person name="Kaul S."/>
            <person name="White O."/>
            <person name="Alonso J."/>
            <person name="Altafi H."/>
            <person name="Araujo R."/>
            <person name="Bowman C.L."/>
            <person name="Brooks S.Y."/>
            <person name="Buehler E."/>
            <person name="Chan A."/>
            <person name="Chao Q."/>
            <person name="Chen H."/>
            <person name="Cheuk R.F."/>
            <person name="Chin C.W."/>
            <person name="Chung M.K."/>
            <person name="Conn L."/>
            <person name="Conway A.B."/>
            <person name="Conway A.R."/>
            <person name="Creasy T.H."/>
            <person name="Dewar K."/>
            <person name="Dunn P."/>
            <person name="Etgu P."/>
            <person name="Feldblyum T.V."/>
            <person name="Feng J.-D."/>
            <person name="Fong B."/>
            <person name="Fujii C.Y."/>
            <person name="Gill J.E."/>
            <person name="Goldsmith A.D."/>
            <person name="Haas B."/>
            <person name="Hansen N.F."/>
            <person name="Hughes B."/>
            <person name="Huizar L."/>
            <person name="Hunter J.L."/>
            <person name="Jenkins J."/>
            <person name="Johnson-Hopson C."/>
            <person name="Khan S."/>
            <person name="Khaykin E."/>
            <person name="Kim C.J."/>
            <person name="Koo H.L."/>
            <person name="Kremenetskaia I."/>
            <person name="Kurtz D.B."/>
            <person name="Kwan A."/>
            <person name="Lam B."/>
            <person name="Langin-Hooper S."/>
            <person name="Lee A."/>
            <person name="Lee J.M."/>
            <person name="Lenz C.A."/>
            <person name="Li J.H."/>
            <person name="Li Y.-P."/>
            <person name="Lin X."/>
            <person name="Liu S.X."/>
            <person name="Liu Z.A."/>
            <person name="Luros J.S."/>
            <person name="Maiti R."/>
            <person name="Marziali A."/>
            <person name="Militscher J."/>
            <person name="Miranda M."/>
            <person name="Nguyen M."/>
            <person name="Nierman W.C."/>
            <person name="Osborne B.I."/>
            <person name="Pai G."/>
            <person name="Peterson J."/>
            <person name="Pham P.K."/>
            <person name="Rizzo M."/>
            <person name="Rooney T."/>
            <person name="Rowley D."/>
            <person name="Sakano H."/>
            <person name="Salzberg S.L."/>
            <person name="Schwartz J.R."/>
            <person name="Shinn P."/>
            <person name="Southwick A.M."/>
            <person name="Sun H."/>
            <person name="Tallon L.J."/>
            <person name="Tambunga G."/>
            <person name="Toriumi M.J."/>
            <person name="Town C.D."/>
            <person name="Utterback T."/>
            <person name="Van Aken S."/>
            <person name="Vaysberg M."/>
            <person name="Vysotskaia V.S."/>
            <person name="Walker M."/>
            <person name="Wu D."/>
            <person name="Yu G."/>
            <person name="Fraser C.M."/>
            <person name="Venter J.C."/>
            <person name="Davis R.W."/>
        </authorList>
    </citation>
    <scope>NUCLEOTIDE SEQUENCE [LARGE SCALE GENOMIC DNA]</scope>
    <source>
        <strain>cv. Columbia</strain>
    </source>
</reference>
<reference key="2">
    <citation type="journal article" date="2017" name="Plant J.">
        <title>Araport11: a complete reannotation of the Arabidopsis thaliana reference genome.</title>
        <authorList>
            <person name="Cheng C.Y."/>
            <person name="Krishnakumar V."/>
            <person name="Chan A.P."/>
            <person name="Thibaud-Nissen F."/>
            <person name="Schobel S."/>
            <person name="Town C.D."/>
        </authorList>
    </citation>
    <scope>GENOME REANNOTATION</scope>
    <source>
        <strain>cv. Columbia</strain>
    </source>
</reference>
<reference key="3">
    <citation type="submission" date="2002-03" db="EMBL/GenBank/DDBJ databases">
        <title>Full-length cDNA from Arabidopsis thaliana.</title>
        <authorList>
            <person name="Brover V.V."/>
            <person name="Troukhan M.E."/>
            <person name="Alexandrov N.A."/>
            <person name="Lu Y.-P."/>
            <person name="Flavell R.B."/>
            <person name="Feldmann K.A."/>
        </authorList>
    </citation>
    <scope>NUCLEOTIDE SEQUENCE [LARGE SCALE MRNA]</scope>
</reference>
<reference key="4">
    <citation type="journal article" date="2003" name="Science">
        <title>Empirical analysis of transcriptional activity in the Arabidopsis genome.</title>
        <authorList>
            <person name="Yamada K."/>
            <person name="Lim J."/>
            <person name="Dale J.M."/>
            <person name="Chen H."/>
            <person name="Shinn P."/>
            <person name="Palm C.J."/>
            <person name="Southwick A.M."/>
            <person name="Wu H.C."/>
            <person name="Kim C.J."/>
            <person name="Nguyen M."/>
            <person name="Pham P.K."/>
            <person name="Cheuk R.F."/>
            <person name="Karlin-Newmann G."/>
            <person name="Liu S.X."/>
            <person name="Lam B."/>
            <person name="Sakano H."/>
            <person name="Wu T."/>
            <person name="Yu G."/>
            <person name="Miranda M."/>
            <person name="Quach H.L."/>
            <person name="Tripp M."/>
            <person name="Chang C.H."/>
            <person name="Lee J.M."/>
            <person name="Toriumi M.J."/>
            <person name="Chan M.M."/>
            <person name="Tang C.C."/>
            <person name="Onodera C.S."/>
            <person name="Deng J.M."/>
            <person name="Akiyama K."/>
            <person name="Ansari Y."/>
            <person name="Arakawa T."/>
            <person name="Banh J."/>
            <person name="Banno F."/>
            <person name="Bowser L."/>
            <person name="Brooks S.Y."/>
            <person name="Carninci P."/>
            <person name="Chao Q."/>
            <person name="Choy N."/>
            <person name="Enju A."/>
            <person name="Goldsmith A.D."/>
            <person name="Gurjal M."/>
            <person name="Hansen N.F."/>
            <person name="Hayashizaki Y."/>
            <person name="Johnson-Hopson C."/>
            <person name="Hsuan V.W."/>
            <person name="Iida K."/>
            <person name="Karnes M."/>
            <person name="Khan S."/>
            <person name="Koesema E."/>
            <person name="Ishida J."/>
            <person name="Jiang P.X."/>
            <person name="Jones T."/>
            <person name="Kawai J."/>
            <person name="Kamiya A."/>
            <person name="Meyers C."/>
            <person name="Nakajima M."/>
            <person name="Narusaka M."/>
            <person name="Seki M."/>
            <person name="Sakurai T."/>
            <person name="Satou M."/>
            <person name="Tamse R."/>
            <person name="Vaysberg M."/>
            <person name="Wallender E.K."/>
            <person name="Wong C."/>
            <person name="Yamamura Y."/>
            <person name="Yuan S."/>
            <person name="Shinozaki K."/>
            <person name="Davis R.W."/>
            <person name="Theologis A."/>
            <person name="Ecker J.R."/>
        </authorList>
    </citation>
    <scope>NUCLEOTIDE SEQUENCE [LARGE SCALE MRNA] OF 70-414</scope>
    <source>
        <strain>cv. Columbia</strain>
    </source>
</reference>
<reference key="5">
    <citation type="journal article" date="2007" name="Mol. Cell. Proteomics">
        <title>Multidimensional protein identification technology (MudPIT) analysis of ubiquitinated proteins in plants.</title>
        <authorList>
            <person name="Maor R."/>
            <person name="Jones A."/>
            <person name="Nuehse T.S."/>
            <person name="Studholme D.J."/>
            <person name="Peck S.C."/>
            <person name="Shirasu K."/>
        </authorList>
    </citation>
    <scope>IDENTIFICATION BY MASS SPECTROMETRY [LARGE SCALE ANALYSIS]</scope>
    <source>
        <strain>cv. Landsberg erecta</strain>
    </source>
</reference>
<dbReference type="EMBL" id="AC000132">
    <property type="protein sequence ID" value="AAB60721.1"/>
    <property type="molecule type" value="Genomic_DNA"/>
</dbReference>
<dbReference type="EMBL" id="CP002684">
    <property type="protein sequence ID" value="AEE28472.1"/>
    <property type="molecule type" value="Genomic_DNA"/>
</dbReference>
<dbReference type="EMBL" id="AY089154">
    <property type="status" value="NOT_ANNOTATED_CDS"/>
    <property type="molecule type" value="mRNA"/>
</dbReference>
<dbReference type="EMBL" id="AY080820">
    <property type="protein sequence ID" value="AAL87298.1"/>
    <property type="molecule type" value="mRNA"/>
</dbReference>
<dbReference type="PIR" id="B86230">
    <property type="entry name" value="B86230"/>
</dbReference>
<dbReference type="RefSeq" id="NP_563848.1">
    <molecule id="O04487-1"/>
    <property type="nucleotide sequence ID" value="NM_100836.4"/>
</dbReference>
<dbReference type="SMR" id="O04487"/>
<dbReference type="BioGRID" id="22732">
    <property type="interactions" value="10"/>
</dbReference>
<dbReference type="FunCoup" id="O04487">
    <property type="interactions" value="3768"/>
</dbReference>
<dbReference type="STRING" id="3702.O04487"/>
<dbReference type="iPTMnet" id="O04487"/>
<dbReference type="SwissPalm" id="O04487"/>
<dbReference type="PaxDb" id="3702-AT1G09640.1"/>
<dbReference type="ProteomicsDB" id="221917">
    <molecule id="O04487-1"/>
</dbReference>
<dbReference type="EnsemblPlants" id="AT1G09640.1">
    <molecule id="O04487-1"/>
    <property type="protein sequence ID" value="AT1G09640.1"/>
    <property type="gene ID" value="AT1G09640"/>
</dbReference>
<dbReference type="GeneID" id="837491"/>
<dbReference type="Gramene" id="AT1G09640.1">
    <molecule id="O04487-1"/>
    <property type="protein sequence ID" value="AT1G09640.1"/>
    <property type="gene ID" value="AT1G09640"/>
</dbReference>
<dbReference type="KEGG" id="ath:AT1G09640"/>
<dbReference type="Araport" id="AT1G09640"/>
<dbReference type="TAIR" id="AT1G09640"/>
<dbReference type="eggNOG" id="KOG0867">
    <property type="taxonomic scope" value="Eukaryota"/>
</dbReference>
<dbReference type="eggNOG" id="KOG1627">
    <property type="taxonomic scope" value="Eukaryota"/>
</dbReference>
<dbReference type="HOGENOM" id="CLU_011226_3_0_1"/>
<dbReference type="InParanoid" id="O04487"/>
<dbReference type="OrthoDB" id="249703at2759"/>
<dbReference type="PhylomeDB" id="O04487"/>
<dbReference type="CD-CODE" id="4299E36E">
    <property type="entry name" value="Nucleolus"/>
</dbReference>
<dbReference type="PRO" id="PR:O04487"/>
<dbReference type="Proteomes" id="UP000006548">
    <property type="component" value="Chromosome 1"/>
</dbReference>
<dbReference type="ExpressionAtlas" id="O04487">
    <property type="expression patterns" value="baseline and differential"/>
</dbReference>
<dbReference type="GO" id="GO:0005829">
    <property type="term" value="C:cytosol"/>
    <property type="evidence" value="ECO:0007005"/>
    <property type="project" value="TAIR"/>
</dbReference>
<dbReference type="GO" id="GO:0005576">
    <property type="term" value="C:extracellular region"/>
    <property type="evidence" value="ECO:0007005"/>
    <property type="project" value="TAIR"/>
</dbReference>
<dbReference type="GO" id="GO:0009506">
    <property type="term" value="C:plasmodesma"/>
    <property type="evidence" value="ECO:0007005"/>
    <property type="project" value="TAIR"/>
</dbReference>
<dbReference type="GO" id="GO:0005773">
    <property type="term" value="C:vacuole"/>
    <property type="evidence" value="ECO:0007005"/>
    <property type="project" value="TAIR"/>
</dbReference>
<dbReference type="GO" id="GO:0004364">
    <property type="term" value="F:glutathione transferase activity"/>
    <property type="evidence" value="ECO:0007669"/>
    <property type="project" value="InterPro"/>
</dbReference>
<dbReference type="GO" id="GO:0003746">
    <property type="term" value="F:translation elongation factor activity"/>
    <property type="evidence" value="ECO:0007669"/>
    <property type="project" value="UniProtKB-KW"/>
</dbReference>
<dbReference type="CDD" id="cd03181">
    <property type="entry name" value="GST_C_EF1Bgamma_like"/>
    <property type="match status" value="1"/>
</dbReference>
<dbReference type="CDD" id="cd03044">
    <property type="entry name" value="GST_N_EF1Bgamma"/>
    <property type="match status" value="1"/>
</dbReference>
<dbReference type="FunFam" id="1.20.1050.10:FF:000006">
    <property type="entry name" value="Elongation factor 1 gamma"/>
    <property type="match status" value="1"/>
</dbReference>
<dbReference type="FunFam" id="3.30.70.1010:FF:000001">
    <property type="entry name" value="Elongation factor 1-gamma 1"/>
    <property type="match status" value="1"/>
</dbReference>
<dbReference type="FunFam" id="3.40.30.10:FF:000148">
    <property type="entry name" value="Elongation factor 1B gamma"/>
    <property type="match status" value="1"/>
</dbReference>
<dbReference type="Gene3D" id="1.20.1050.10">
    <property type="match status" value="1"/>
</dbReference>
<dbReference type="Gene3D" id="3.40.30.10">
    <property type="entry name" value="Glutaredoxin"/>
    <property type="match status" value="1"/>
</dbReference>
<dbReference type="Gene3D" id="3.30.70.1010">
    <property type="entry name" value="Translation elongation factor EF1B, gamma chain, conserved domain"/>
    <property type="match status" value="1"/>
</dbReference>
<dbReference type="InterPro" id="IPR044628">
    <property type="entry name" value="EF-1-gamma_plant"/>
</dbReference>
<dbReference type="InterPro" id="IPR001662">
    <property type="entry name" value="EF1B_G_C"/>
</dbReference>
<dbReference type="InterPro" id="IPR036433">
    <property type="entry name" value="EF1B_G_C_sf"/>
</dbReference>
<dbReference type="InterPro" id="IPR010987">
    <property type="entry name" value="Glutathione-S-Trfase_C-like"/>
</dbReference>
<dbReference type="InterPro" id="IPR036282">
    <property type="entry name" value="Glutathione-S-Trfase_C_sf"/>
</dbReference>
<dbReference type="InterPro" id="IPR040079">
    <property type="entry name" value="Glutathione_S-Trfase"/>
</dbReference>
<dbReference type="InterPro" id="IPR004045">
    <property type="entry name" value="Glutathione_S-Trfase_N"/>
</dbReference>
<dbReference type="InterPro" id="IPR004046">
    <property type="entry name" value="GST_C"/>
</dbReference>
<dbReference type="InterPro" id="IPR036249">
    <property type="entry name" value="Thioredoxin-like_sf"/>
</dbReference>
<dbReference type="PANTHER" id="PTHR44372">
    <property type="entry name" value="ELONGATION FACTOR 1-GAMMA 1-RELATED"/>
    <property type="match status" value="1"/>
</dbReference>
<dbReference type="PANTHER" id="PTHR44372:SF13">
    <property type="entry name" value="ELONGATION FACTOR 1-GAMMA 1-RELATED"/>
    <property type="match status" value="1"/>
</dbReference>
<dbReference type="Pfam" id="PF00647">
    <property type="entry name" value="EF1G"/>
    <property type="match status" value="1"/>
</dbReference>
<dbReference type="Pfam" id="PF00043">
    <property type="entry name" value="GST_C"/>
    <property type="match status" value="1"/>
</dbReference>
<dbReference type="Pfam" id="PF02798">
    <property type="entry name" value="GST_N"/>
    <property type="match status" value="1"/>
</dbReference>
<dbReference type="SFLD" id="SFLDS00019">
    <property type="entry name" value="Glutathione_Transferase_(cytos"/>
    <property type="match status" value="1"/>
</dbReference>
<dbReference type="SFLD" id="SFLDG00358">
    <property type="entry name" value="Main_(cytGST)"/>
    <property type="match status" value="1"/>
</dbReference>
<dbReference type="SMART" id="SM01183">
    <property type="entry name" value="EF1G"/>
    <property type="match status" value="1"/>
</dbReference>
<dbReference type="SUPFAM" id="SSF89942">
    <property type="entry name" value="eEF1-gamma domain"/>
    <property type="match status" value="1"/>
</dbReference>
<dbReference type="SUPFAM" id="SSF47616">
    <property type="entry name" value="GST C-terminal domain-like"/>
    <property type="match status" value="1"/>
</dbReference>
<dbReference type="SUPFAM" id="SSF52833">
    <property type="entry name" value="Thioredoxin-like"/>
    <property type="match status" value="1"/>
</dbReference>
<dbReference type="PROSITE" id="PS50040">
    <property type="entry name" value="EF1G_C"/>
    <property type="match status" value="1"/>
</dbReference>
<dbReference type="PROSITE" id="PS50405">
    <property type="entry name" value="GST_CTER"/>
    <property type="match status" value="1"/>
</dbReference>
<dbReference type="PROSITE" id="PS50404">
    <property type="entry name" value="GST_NTER"/>
    <property type="match status" value="1"/>
</dbReference>
<name>EF1G1_ARATH</name>
<feature type="chain" id="PRO_0000208826" description="Probable elongation factor 1-gamma 1">
    <location>
        <begin position="1"/>
        <end position="414"/>
    </location>
</feature>
<feature type="domain" description="GST N-terminal">
    <location>
        <begin position="1"/>
        <end position="82"/>
    </location>
</feature>
<feature type="domain" description="GST C-terminal">
    <location>
        <begin position="87"/>
        <end position="215"/>
    </location>
</feature>
<feature type="domain" description="EF-1-gamma C-terminal" evidence="2">
    <location>
        <begin position="254"/>
        <end position="414"/>
    </location>
</feature>
<feature type="region of interest" description="Disordered" evidence="3">
    <location>
        <begin position="214"/>
        <end position="260"/>
    </location>
</feature>
<feature type="compositionally biased region" description="Low complexity" evidence="3">
    <location>
        <begin position="214"/>
        <end position="224"/>
    </location>
</feature>
<feature type="compositionally biased region" description="Basic and acidic residues" evidence="3">
    <location>
        <begin position="225"/>
        <end position="236"/>
    </location>
</feature>
<comment type="function">
    <text evidence="1">Probably plays a role in anchoring the complex to other cellular components.</text>
</comment>
<comment type="subunit">
    <text evidence="1">EF-1 is composed of four subunits: alpha, beta, delta, and gamma.</text>
</comment>
<comment type="alternative products">
    <event type="alternative splicing"/>
    <isoform>
        <id>O04487-1</id>
        <name>1</name>
        <sequence type="displayed"/>
    </isoform>
    <text>A number of isoforms are produced. According to EST sequences.</text>
</comment>
<comment type="sequence caution" evidence="4">
    <conflict type="frameshift">
        <sequence resource="EMBL" id="AY089154"/>
    </conflict>
</comment>